<comment type="function">
    <text>Sigma factors are initiation factors that promote the attachment of RNA polymerase to specific initiation sites and are then released.</text>
</comment>
<comment type="similarity">
    <text evidence="1">Belongs to the sigma-70 factor family.</text>
</comment>
<protein>
    <recommendedName>
        <fullName>Putative RNA polymerase sigma-G factor</fullName>
    </recommendedName>
    <alternativeName>
        <fullName>ORF3</fullName>
    </alternativeName>
</protein>
<reference key="1">
    <citation type="journal article" date="1991" name="J. Bacteriol.">
        <title>Molecular cloning and characterization of two genes encoding sigma factors that direct transcription from a Bacillus thuringiensis crystal protein gene promoter.</title>
        <authorList>
            <person name="Adams L.F."/>
            <person name="Brown K.L."/>
            <person name="Whiteley H.R."/>
        </authorList>
    </citation>
    <scope>NUCLEOTIDE SEQUENCE [GENOMIC DNA]</scope>
    <source>
        <strain>HD-1</strain>
    </source>
</reference>
<evidence type="ECO:0000305" key="1"/>
<feature type="chain" id="PRO_0000093947" description="Putative RNA polymerase sigma-G factor">
    <location>
        <begin position="1"/>
        <end position="125" status="greater than"/>
    </location>
</feature>
<feature type="non-terminal residue">
    <location>
        <position position="125"/>
    </location>
</feature>
<keyword id="KW-0238">DNA-binding</keyword>
<keyword id="KW-0731">Sigma factor</keyword>
<keyword id="KW-0804">Transcription</keyword>
<keyword id="KW-0805">Transcription regulation</keyword>
<name>RPSX_BACTK</name>
<organism>
    <name type="scientific">Bacillus thuringiensis subsp. kurstaki</name>
    <dbReference type="NCBI Taxonomy" id="29339"/>
    <lineage>
        <taxon>Bacteria</taxon>
        <taxon>Bacillati</taxon>
        <taxon>Bacillota</taxon>
        <taxon>Bacilli</taxon>
        <taxon>Bacillales</taxon>
        <taxon>Bacillaceae</taxon>
        <taxon>Bacillus</taxon>
        <taxon>Bacillus cereus group</taxon>
    </lineage>
</organism>
<dbReference type="EMBL" id="X56697">
    <property type="protein sequence ID" value="CAA40027.1"/>
    <property type="molecule type" value="Genomic_DNA"/>
</dbReference>
<dbReference type="PIR" id="C39441">
    <property type="entry name" value="C39441"/>
</dbReference>
<dbReference type="SMR" id="P26768"/>
<dbReference type="GO" id="GO:0003677">
    <property type="term" value="F:DNA binding"/>
    <property type="evidence" value="ECO:0007669"/>
    <property type="project" value="UniProtKB-KW"/>
</dbReference>
<dbReference type="GO" id="GO:0016987">
    <property type="term" value="F:sigma factor activity"/>
    <property type="evidence" value="ECO:0007669"/>
    <property type="project" value="UniProtKB-KW"/>
</dbReference>
<dbReference type="GO" id="GO:0006352">
    <property type="term" value="P:DNA-templated transcription initiation"/>
    <property type="evidence" value="ECO:0007669"/>
    <property type="project" value="InterPro"/>
</dbReference>
<dbReference type="FunFam" id="1.20.120.1810:FF:000002">
    <property type="entry name" value="RNA polymerase sigma factor"/>
    <property type="match status" value="1"/>
</dbReference>
<dbReference type="Gene3D" id="1.20.120.1810">
    <property type="match status" value="1"/>
</dbReference>
<dbReference type="InterPro" id="IPR014284">
    <property type="entry name" value="RNA_pol_sigma-70_dom"/>
</dbReference>
<dbReference type="InterPro" id="IPR000943">
    <property type="entry name" value="RNA_pol_sigma70"/>
</dbReference>
<dbReference type="InterPro" id="IPR007627">
    <property type="entry name" value="RNA_pol_sigma70_r2"/>
</dbReference>
<dbReference type="InterPro" id="IPR013325">
    <property type="entry name" value="RNA_pol_sigma_r2"/>
</dbReference>
<dbReference type="InterPro" id="IPR050239">
    <property type="entry name" value="Sigma-70_RNA_pol_init_factors"/>
</dbReference>
<dbReference type="NCBIfam" id="TIGR02937">
    <property type="entry name" value="sigma70-ECF"/>
    <property type="match status" value="1"/>
</dbReference>
<dbReference type="PANTHER" id="PTHR30603">
    <property type="entry name" value="RNA POLYMERASE SIGMA FACTOR RPO"/>
    <property type="match status" value="1"/>
</dbReference>
<dbReference type="PANTHER" id="PTHR30603:SF17">
    <property type="entry name" value="RNA POLYMERASE SIGMA-G FACTOR"/>
    <property type="match status" value="1"/>
</dbReference>
<dbReference type="Pfam" id="PF04542">
    <property type="entry name" value="Sigma70_r2"/>
    <property type="match status" value="1"/>
</dbReference>
<dbReference type="SUPFAM" id="SSF88946">
    <property type="entry name" value="Sigma2 domain of RNA polymerase sigma factors"/>
    <property type="match status" value="1"/>
</dbReference>
<dbReference type="PROSITE" id="PS00715">
    <property type="entry name" value="SIGMA70_1"/>
    <property type="match status" value="1"/>
</dbReference>
<sequence length="125" mass="14413">MTRNKVEICGVDTAKLPVLKNEEMRKLFREMQSGEISAREKLVNGNLRLVLSVIQRFNNRGEYVDDLFQVGCIGLMKSIDNFDLGQNVKFSTYAVPMIIGEIRRYLRDNNPIRVSRSLRDIAYKA</sequence>
<proteinExistence type="inferred from homology"/>
<accession>P26768</accession>